<evidence type="ECO:0000255" key="1">
    <source>
        <dbReference type="HAMAP-Rule" id="MF_01197"/>
    </source>
</evidence>
<gene>
    <name evidence="1" type="primary">sepF</name>
    <name type="ordered locus">CPF_2107</name>
</gene>
<feature type="chain" id="PRO_0000334000" description="Cell division protein SepF">
    <location>
        <begin position="1"/>
        <end position="149"/>
    </location>
</feature>
<comment type="function">
    <text evidence="1">Cell division protein that is part of the divisome complex and is recruited early to the Z-ring. Probably stimulates Z-ring formation, perhaps through the cross-linking of FtsZ protofilaments. Its function overlaps with FtsA.</text>
</comment>
<comment type="subunit">
    <text evidence="1">Homodimer. Interacts with FtsZ.</text>
</comment>
<comment type="subcellular location">
    <subcellularLocation>
        <location evidence="1">Cytoplasm</location>
    </subcellularLocation>
    <text evidence="1">Localizes to the division site, in a FtsZ-dependent manner.</text>
</comment>
<comment type="similarity">
    <text evidence="1">Belongs to the SepF family.</text>
</comment>
<sequence>MSKVVSKMKSFLGFDEFEDEDEVMEEEEVMEEEESFAPVLSSKKNGKVVNIHTANTAKLMITKPLVYDDATEICTALKNRKIVVINTTSLELRTAQRLIDFVGGACYALCGELQEVEKGVFIVSPSNVEVSNELKSELSNKGMFNWASK</sequence>
<accession>Q0TPA4</accession>
<proteinExistence type="inferred from homology"/>
<protein>
    <recommendedName>
        <fullName evidence="1">Cell division protein SepF</fullName>
    </recommendedName>
</protein>
<name>SEPF_CLOP1</name>
<dbReference type="EMBL" id="CP000246">
    <property type="protein sequence ID" value="ABG83115.1"/>
    <property type="molecule type" value="Genomic_DNA"/>
</dbReference>
<dbReference type="RefSeq" id="WP_003451474.1">
    <property type="nucleotide sequence ID" value="NC_008261.1"/>
</dbReference>
<dbReference type="SMR" id="Q0TPA4"/>
<dbReference type="STRING" id="195103.CPF_2107"/>
<dbReference type="PaxDb" id="195103-CPF_2107"/>
<dbReference type="KEGG" id="cpf:CPF_2107"/>
<dbReference type="eggNOG" id="COG1799">
    <property type="taxonomic scope" value="Bacteria"/>
</dbReference>
<dbReference type="HOGENOM" id="CLU_078499_4_0_9"/>
<dbReference type="Proteomes" id="UP000001823">
    <property type="component" value="Chromosome"/>
</dbReference>
<dbReference type="GO" id="GO:0005737">
    <property type="term" value="C:cytoplasm"/>
    <property type="evidence" value="ECO:0007669"/>
    <property type="project" value="UniProtKB-SubCell"/>
</dbReference>
<dbReference type="GO" id="GO:0000917">
    <property type="term" value="P:division septum assembly"/>
    <property type="evidence" value="ECO:0007669"/>
    <property type="project" value="UniProtKB-KW"/>
</dbReference>
<dbReference type="GO" id="GO:0043093">
    <property type="term" value="P:FtsZ-dependent cytokinesis"/>
    <property type="evidence" value="ECO:0007669"/>
    <property type="project" value="UniProtKB-UniRule"/>
</dbReference>
<dbReference type="Gene3D" id="3.30.110.150">
    <property type="entry name" value="SepF-like protein"/>
    <property type="match status" value="1"/>
</dbReference>
<dbReference type="HAMAP" id="MF_01197">
    <property type="entry name" value="SepF"/>
    <property type="match status" value="1"/>
</dbReference>
<dbReference type="InterPro" id="IPR023052">
    <property type="entry name" value="Cell_div_SepF"/>
</dbReference>
<dbReference type="InterPro" id="IPR007561">
    <property type="entry name" value="Cell_div_SepF/SepF-rel"/>
</dbReference>
<dbReference type="InterPro" id="IPR038594">
    <property type="entry name" value="SepF-like_sf"/>
</dbReference>
<dbReference type="PANTHER" id="PTHR35798">
    <property type="entry name" value="CELL DIVISION PROTEIN SEPF"/>
    <property type="match status" value="1"/>
</dbReference>
<dbReference type="PANTHER" id="PTHR35798:SF1">
    <property type="entry name" value="CELL DIVISION PROTEIN SEPF"/>
    <property type="match status" value="1"/>
</dbReference>
<dbReference type="Pfam" id="PF04472">
    <property type="entry name" value="SepF"/>
    <property type="match status" value="1"/>
</dbReference>
<organism>
    <name type="scientific">Clostridium perfringens (strain ATCC 13124 / DSM 756 / JCM 1290 / NCIMB 6125 / NCTC 8237 / Type A)</name>
    <dbReference type="NCBI Taxonomy" id="195103"/>
    <lineage>
        <taxon>Bacteria</taxon>
        <taxon>Bacillati</taxon>
        <taxon>Bacillota</taxon>
        <taxon>Clostridia</taxon>
        <taxon>Eubacteriales</taxon>
        <taxon>Clostridiaceae</taxon>
        <taxon>Clostridium</taxon>
    </lineage>
</organism>
<keyword id="KW-0131">Cell cycle</keyword>
<keyword id="KW-0132">Cell division</keyword>
<keyword id="KW-0963">Cytoplasm</keyword>
<keyword id="KW-0717">Septation</keyword>
<reference key="1">
    <citation type="journal article" date="2006" name="Genome Res.">
        <title>Skewed genomic variability in strains of the toxigenic bacterial pathogen, Clostridium perfringens.</title>
        <authorList>
            <person name="Myers G.S.A."/>
            <person name="Rasko D.A."/>
            <person name="Cheung J.K."/>
            <person name="Ravel J."/>
            <person name="Seshadri R."/>
            <person name="DeBoy R.T."/>
            <person name="Ren Q."/>
            <person name="Varga J."/>
            <person name="Awad M.M."/>
            <person name="Brinkac L.M."/>
            <person name="Daugherty S.C."/>
            <person name="Haft D.H."/>
            <person name="Dodson R.J."/>
            <person name="Madupu R."/>
            <person name="Nelson W.C."/>
            <person name="Rosovitz M.J."/>
            <person name="Sullivan S.A."/>
            <person name="Khouri H."/>
            <person name="Dimitrov G.I."/>
            <person name="Watkins K.L."/>
            <person name="Mulligan S."/>
            <person name="Benton J."/>
            <person name="Radune D."/>
            <person name="Fisher D.J."/>
            <person name="Atkins H.S."/>
            <person name="Hiscox T."/>
            <person name="Jost B.H."/>
            <person name="Billington S.J."/>
            <person name="Songer J.G."/>
            <person name="McClane B.A."/>
            <person name="Titball R.W."/>
            <person name="Rood J.I."/>
            <person name="Melville S.B."/>
            <person name="Paulsen I.T."/>
        </authorList>
    </citation>
    <scope>NUCLEOTIDE SEQUENCE [LARGE SCALE GENOMIC DNA]</scope>
    <source>
        <strain>ATCC 13124 / DSM 756 / JCM 1290 / NCIMB 6125 / NCTC 8237 / S 107 / Type A</strain>
    </source>
</reference>